<accession>B7NHB5</accession>
<reference key="1">
    <citation type="journal article" date="2009" name="PLoS Genet.">
        <title>Organised genome dynamics in the Escherichia coli species results in highly diverse adaptive paths.</title>
        <authorList>
            <person name="Touchon M."/>
            <person name="Hoede C."/>
            <person name="Tenaillon O."/>
            <person name="Barbe V."/>
            <person name="Baeriswyl S."/>
            <person name="Bidet P."/>
            <person name="Bingen E."/>
            <person name="Bonacorsi S."/>
            <person name="Bouchier C."/>
            <person name="Bouvet O."/>
            <person name="Calteau A."/>
            <person name="Chiapello H."/>
            <person name="Clermont O."/>
            <person name="Cruveiller S."/>
            <person name="Danchin A."/>
            <person name="Diard M."/>
            <person name="Dossat C."/>
            <person name="Karoui M.E."/>
            <person name="Frapy E."/>
            <person name="Garry L."/>
            <person name="Ghigo J.M."/>
            <person name="Gilles A.M."/>
            <person name="Johnson J."/>
            <person name="Le Bouguenec C."/>
            <person name="Lescat M."/>
            <person name="Mangenot S."/>
            <person name="Martinez-Jehanne V."/>
            <person name="Matic I."/>
            <person name="Nassif X."/>
            <person name="Oztas S."/>
            <person name="Petit M.A."/>
            <person name="Pichon C."/>
            <person name="Rouy Z."/>
            <person name="Ruf C.S."/>
            <person name="Schneider D."/>
            <person name="Tourret J."/>
            <person name="Vacherie B."/>
            <person name="Vallenet D."/>
            <person name="Medigue C."/>
            <person name="Rocha E.P.C."/>
            <person name="Denamur E."/>
        </authorList>
    </citation>
    <scope>NUCLEOTIDE SEQUENCE [LARGE SCALE GENOMIC DNA]</scope>
    <source>
        <strain>IAI39 / ExPEC</strain>
    </source>
</reference>
<dbReference type="EMBL" id="CU928164">
    <property type="protein sequence ID" value="CAR16153.1"/>
    <property type="molecule type" value="Genomic_DNA"/>
</dbReference>
<dbReference type="RefSeq" id="WP_000843577.1">
    <property type="nucleotide sequence ID" value="NC_011750.1"/>
</dbReference>
<dbReference type="RefSeq" id="YP_002406060.1">
    <property type="nucleotide sequence ID" value="NC_011750.1"/>
</dbReference>
<dbReference type="STRING" id="585057.ECIAI39_0012"/>
<dbReference type="KEGG" id="ect:ECIAI39_0012"/>
<dbReference type="PATRIC" id="fig|585057.6.peg.11"/>
<dbReference type="HOGENOM" id="CLU_158661_0_0_6"/>
<dbReference type="Proteomes" id="UP000000749">
    <property type="component" value="Chromosome"/>
</dbReference>
<dbReference type="HAMAP" id="MF_01372">
    <property type="entry name" value="UPF0412"/>
    <property type="match status" value="1"/>
</dbReference>
<dbReference type="InterPro" id="IPR020240">
    <property type="entry name" value="UPF0412_YaaI"/>
</dbReference>
<dbReference type="NCBIfam" id="NF007541">
    <property type="entry name" value="PRK10154.1"/>
    <property type="match status" value="1"/>
</dbReference>
<dbReference type="Pfam" id="PF10807">
    <property type="entry name" value="DUF2541"/>
    <property type="match status" value="1"/>
</dbReference>
<keyword id="KW-0732">Signal</keyword>
<evidence type="ECO:0000255" key="1">
    <source>
        <dbReference type="HAMAP-Rule" id="MF_01372"/>
    </source>
</evidence>
<proteinExistence type="inferred from homology"/>
<sequence>MKSVFTLSASLAISLLLCCTAQANNHKILGVIAMPRNETNDLALKLPVCRIVKRIQLTADHGDLQLSGAAVYFKAARSASQSLNIPSEIKEGQTTDWININSDNDNKRCVSKITFSGHTVNSSDMATLKIIGDD</sequence>
<protein>
    <recommendedName>
        <fullName evidence="1">UPF0412 protein YaaI</fullName>
    </recommendedName>
</protein>
<name>YAAI_ECO7I</name>
<feature type="signal peptide" evidence="1">
    <location>
        <begin position="1"/>
        <end position="23"/>
    </location>
</feature>
<feature type="chain" id="PRO_1000144736" description="UPF0412 protein YaaI">
    <location>
        <begin position="24"/>
        <end position="134"/>
    </location>
</feature>
<organism>
    <name type="scientific">Escherichia coli O7:K1 (strain IAI39 / ExPEC)</name>
    <dbReference type="NCBI Taxonomy" id="585057"/>
    <lineage>
        <taxon>Bacteria</taxon>
        <taxon>Pseudomonadati</taxon>
        <taxon>Pseudomonadota</taxon>
        <taxon>Gammaproteobacteria</taxon>
        <taxon>Enterobacterales</taxon>
        <taxon>Enterobacteriaceae</taxon>
        <taxon>Escherichia</taxon>
    </lineage>
</organism>
<gene>
    <name evidence="1" type="primary">yaaI</name>
    <name type="ordered locus">ECIAI39_0012</name>
</gene>
<comment type="similarity">
    <text evidence="1">Belongs to the UPF0412 family.</text>
</comment>